<dbReference type="EMBL" id="AP009369">
    <property type="protein sequence ID" value="BAF50058.1"/>
    <property type="molecule type" value="Genomic_DNA"/>
</dbReference>
<dbReference type="RefSeq" id="YP_001123234.1">
    <property type="nucleotide sequence ID" value="NC_009268.1"/>
</dbReference>
<dbReference type="SMR" id="A4QK53"/>
<dbReference type="GeneID" id="4962516"/>
<dbReference type="GO" id="GO:0009507">
    <property type="term" value="C:chloroplast"/>
    <property type="evidence" value="ECO:0007669"/>
    <property type="project" value="UniProtKB-SubCell"/>
</dbReference>
<dbReference type="GO" id="GO:1990904">
    <property type="term" value="C:ribonucleoprotein complex"/>
    <property type="evidence" value="ECO:0007669"/>
    <property type="project" value="UniProtKB-KW"/>
</dbReference>
<dbReference type="GO" id="GO:0005840">
    <property type="term" value="C:ribosome"/>
    <property type="evidence" value="ECO:0007669"/>
    <property type="project" value="UniProtKB-KW"/>
</dbReference>
<dbReference type="GO" id="GO:0019843">
    <property type="term" value="F:rRNA binding"/>
    <property type="evidence" value="ECO:0007669"/>
    <property type="project" value="UniProtKB-UniRule"/>
</dbReference>
<dbReference type="GO" id="GO:0003735">
    <property type="term" value="F:structural constituent of ribosome"/>
    <property type="evidence" value="ECO:0007669"/>
    <property type="project" value="InterPro"/>
</dbReference>
<dbReference type="GO" id="GO:0006412">
    <property type="term" value="P:translation"/>
    <property type="evidence" value="ECO:0007669"/>
    <property type="project" value="UniProtKB-UniRule"/>
</dbReference>
<dbReference type="FunFam" id="3.30.1490.10:FF:000001">
    <property type="entry name" value="30S ribosomal protein S8"/>
    <property type="match status" value="1"/>
</dbReference>
<dbReference type="FunFam" id="3.30.1370.30:FF:000004">
    <property type="entry name" value="30S ribosomal protein S8, chloroplastic"/>
    <property type="match status" value="1"/>
</dbReference>
<dbReference type="Gene3D" id="3.30.1370.30">
    <property type="match status" value="1"/>
</dbReference>
<dbReference type="Gene3D" id="3.30.1490.10">
    <property type="match status" value="1"/>
</dbReference>
<dbReference type="HAMAP" id="MF_01302_B">
    <property type="entry name" value="Ribosomal_uS8_B"/>
    <property type="match status" value="1"/>
</dbReference>
<dbReference type="InterPro" id="IPR000630">
    <property type="entry name" value="Ribosomal_uS8"/>
</dbReference>
<dbReference type="InterPro" id="IPR047863">
    <property type="entry name" value="Ribosomal_uS8_CS"/>
</dbReference>
<dbReference type="InterPro" id="IPR035987">
    <property type="entry name" value="Ribosomal_uS8_sf"/>
</dbReference>
<dbReference type="NCBIfam" id="NF001109">
    <property type="entry name" value="PRK00136.1"/>
    <property type="match status" value="1"/>
</dbReference>
<dbReference type="PANTHER" id="PTHR11758">
    <property type="entry name" value="40S RIBOSOMAL PROTEIN S15A"/>
    <property type="match status" value="1"/>
</dbReference>
<dbReference type="Pfam" id="PF00410">
    <property type="entry name" value="Ribosomal_S8"/>
    <property type="match status" value="1"/>
</dbReference>
<dbReference type="SUPFAM" id="SSF56047">
    <property type="entry name" value="Ribosomal protein S8"/>
    <property type="match status" value="1"/>
</dbReference>
<dbReference type="PROSITE" id="PS00053">
    <property type="entry name" value="RIBOSOMAL_S8"/>
    <property type="match status" value="1"/>
</dbReference>
<name>RR8_ARAHI</name>
<gene>
    <name type="primary">rps8</name>
</gene>
<organism>
    <name type="scientific">Arabis hirsuta</name>
    <name type="common">Hairy rock-cress</name>
    <name type="synonym">Turritis hirsuta</name>
    <dbReference type="NCBI Taxonomy" id="78191"/>
    <lineage>
        <taxon>Eukaryota</taxon>
        <taxon>Viridiplantae</taxon>
        <taxon>Streptophyta</taxon>
        <taxon>Embryophyta</taxon>
        <taxon>Tracheophyta</taxon>
        <taxon>Spermatophyta</taxon>
        <taxon>Magnoliopsida</taxon>
        <taxon>eudicotyledons</taxon>
        <taxon>Gunneridae</taxon>
        <taxon>Pentapetalae</taxon>
        <taxon>rosids</taxon>
        <taxon>malvids</taxon>
        <taxon>Brassicales</taxon>
        <taxon>Brassicaceae</taxon>
        <taxon>Arabideae</taxon>
        <taxon>Arabis</taxon>
    </lineage>
</organism>
<protein>
    <recommendedName>
        <fullName evidence="2">Small ribosomal subunit protein uS8c</fullName>
    </recommendedName>
    <alternativeName>
        <fullName>30S ribosomal protein S8, chloroplastic</fullName>
    </alternativeName>
</protein>
<reference key="1">
    <citation type="submission" date="2007-03" db="EMBL/GenBank/DDBJ databases">
        <title>Sequencing analysis of Arabis hirsuta chloroplast DNA.</title>
        <authorList>
            <person name="Hosouchi T."/>
            <person name="Tsuruoka H."/>
            <person name="Kotani H."/>
        </authorList>
    </citation>
    <scope>NUCLEOTIDE SEQUENCE [LARGE SCALE GENOMIC DNA]</scope>
</reference>
<accession>A4QK53</accession>
<evidence type="ECO:0000250" key="1"/>
<evidence type="ECO:0000305" key="2"/>
<keyword id="KW-0150">Chloroplast</keyword>
<keyword id="KW-0934">Plastid</keyword>
<keyword id="KW-0687">Ribonucleoprotein</keyword>
<keyword id="KW-0689">Ribosomal protein</keyword>
<keyword id="KW-0694">RNA-binding</keyword>
<keyword id="KW-0699">rRNA-binding</keyword>
<geneLocation type="chloroplast"/>
<sequence length="134" mass="15551">MGKDTIADIITSIRNADMNRKGTVRIESTNITESIVKILLREGFIENVRKHRENNQYFLILTLRHRRNKKESYKTILNLKRISRPGLRIYSNSQRIPRILGGIGIVILSTSQGIMTDREARLKRIGGEILCYIW</sequence>
<proteinExistence type="inferred from homology"/>
<feature type="chain" id="PRO_0000290975" description="Small ribosomal subunit protein uS8c">
    <location>
        <begin position="1"/>
        <end position="134"/>
    </location>
</feature>
<comment type="function">
    <text evidence="1">One of the primary rRNA binding proteins, it binds directly to 16S rRNA central domain where it helps coordinate assembly of the platform of the 30S subunit.</text>
</comment>
<comment type="subunit">
    <text evidence="1">Part of the 30S ribosomal subunit.</text>
</comment>
<comment type="subcellular location">
    <subcellularLocation>
        <location>Plastid</location>
        <location>Chloroplast</location>
    </subcellularLocation>
</comment>
<comment type="similarity">
    <text evidence="2">Belongs to the universal ribosomal protein uS8 family.</text>
</comment>